<feature type="chain" id="PRO_1000164912" description="GTP 3',8-cyclase">
    <location>
        <begin position="1"/>
        <end position="337"/>
    </location>
</feature>
<feature type="domain" description="Radical SAM core" evidence="2">
    <location>
        <begin position="1"/>
        <end position="226"/>
    </location>
</feature>
<feature type="binding site" evidence="1">
    <location>
        <position position="8"/>
    </location>
    <ligand>
        <name>GTP</name>
        <dbReference type="ChEBI" id="CHEBI:37565"/>
    </ligand>
</feature>
<feature type="binding site" evidence="1">
    <location>
        <position position="15"/>
    </location>
    <ligand>
        <name>[4Fe-4S] cluster</name>
        <dbReference type="ChEBI" id="CHEBI:49883"/>
        <label>1</label>
        <note>4Fe-4S-S-AdoMet</note>
    </ligand>
</feature>
<feature type="binding site" evidence="1">
    <location>
        <position position="19"/>
    </location>
    <ligand>
        <name>[4Fe-4S] cluster</name>
        <dbReference type="ChEBI" id="CHEBI:49883"/>
        <label>1</label>
        <note>4Fe-4S-S-AdoMet</note>
    </ligand>
</feature>
<feature type="binding site" evidence="1">
    <location>
        <position position="21"/>
    </location>
    <ligand>
        <name>S-adenosyl-L-methionine</name>
        <dbReference type="ChEBI" id="CHEBI:59789"/>
    </ligand>
</feature>
<feature type="binding site" evidence="1">
    <location>
        <position position="22"/>
    </location>
    <ligand>
        <name>[4Fe-4S] cluster</name>
        <dbReference type="ChEBI" id="CHEBI:49883"/>
        <label>1</label>
        <note>4Fe-4S-S-AdoMet</note>
    </ligand>
</feature>
<feature type="binding site" evidence="1">
    <location>
        <position position="60"/>
    </location>
    <ligand>
        <name>GTP</name>
        <dbReference type="ChEBI" id="CHEBI:37565"/>
    </ligand>
</feature>
<feature type="binding site" evidence="1">
    <location>
        <position position="64"/>
    </location>
    <ligand>
        <name>S-adenosyl-L-methionine</name>
        <dbReference type="ChEBI" id="CHEBI:59789"/>
    </ligand>
</feature>
<feature type="binding site" evidence="1">
    <location>
        <position position="91"/>
    </location>
    <ligand>
        <name>GTP</name>
        <dbReference type="ChEBI" id="CHEBI:37565"/>
    </ligand>
</feature>
<feature type="binding site" evidence="1">
    <location>
        <position position="115"/>
    </location>
    <ligand>
        <name>S-adenosyl-L-methionine</name>
        <dbReference type="ChEBI" id="CHEBI:59789"/>
    </ligand>
</feature>
<feature type="binding site" evidence="1">
    <location>
        <position position="155"/>
    </location>
    <ligand>
        <name>GTP</name>
        <dbReference type="ChEBI" id="CHEBI:37565"/>
    </ligand>
</feature>
<feature type="binding site" evidence="1">
    <location>
        <position position="189"/>
    </location>
    <ligand>
        <name>S-adenosyl-L-methionine</name>
        <dbReference type="ChEBI" id="CHEBI:59789"/>
    </ligand>
</feature>
<feature type="binding site" evidence="1">
    <location>
        <position position="260"/>
    </location>
    <ligand>
        <name>[4Fe-4S] cluster</name>
        <dbReference type="ChEBI" id="CHEBI:49883"/>
        <label>2</label>
        <note>4Fe-4S-substrate</note>
    </ligand>
</feature>
<feature type="binding site" evidence="1">
    <location>
        <position position="263"/>
    </location>
    <ligand>
        <name>[4Fe-4S] cluster</name>
        <dbReference type="ChEBI" id="CHEBI:49883"/>
        <label>2</label>
        <note>4Fe-4S-substrate</note>
    </ligand>
</feature>
<feature type="binding site" evidence="1">
    <location>
        <begin position="265"/>
        <end position="267"/>
    </location>
    <ligand>
        <name>GTP</name>
        <dbReference type="ChEBI" id="CHEBI:37565"/>
    </ligand>
</feature>
<feature type="binding site" evidence="1">
    <location>
        <position position="277"/>
    </location>
    <ligand>
        <name>[4Fe-4S] cluster</name>
        <dbReference type="ChEBI" id="CHEBI:49883"/>
        <label>2</label>
        <note>4Fe-4S-substrate</note>
    </ligand>
</feature>
<proteinExistence type="inferred from homology"/>
<gene>
    <name evidence="1" type="primary">moaA</name>
    <name type="ordered locus">cce_1902</name>
</gene>
<organism>
    <name type="scientific">Crocosphaera subtropica (strain ATCC 51142 / BH68)</name>
    <name type="common">Cyanothece sp. (strain ATCC 51142)</name>
    <dbReference type="NCBI Taxonomy" id="43989"/>
    <lineage>
        <taxon>Bacteria</taxon>
        <taxon>Bacillati</taxon>
        <taxon>Cyanobacteriota</taxon>
        <taxon>Cyanophyceae</taxon>
        <taxon>Oscillatoriophycideae</taxon>
        <taxon>Chroococcales</taxon>
        <taxon>Aphanothecaceae</taxon>
        <taxon>Crocosphaera</taxon>
        <taxon>Crocosphaera subtropica</taxon>
    </lineage>
</organism>
<name>MOAA_CROS5</name>
<dbReference type="EC" id="4.1.99.22" evidence="1"/>
<dbReference type="EMBL" id="CP000806">
    <property type="protein sequence ID" value="ACB51252.1"/>
    <property type="molecule type" value="Genomic_DNA"/>
</dbReference>
<dbReference type="RefSeq" id="WP_009545712.1">
    <property type="nucleotide sequence ID" value="NC_010546.1"/>
</dbReference>
<dbReference type="SMR" id="B1X0G3"/>
<dbReference type="STRING" id="43989.cce_1902"/>
<dbReference type="KEGG" id="cyt:cce_1902"/>
<dbReference type="eggNOG" id="COG2896">
    <property type="taxonomic scope" value="Bacteria"/>
</dbReference>
<dbReference type="HOGENOM" id="CLU_009273_0_1_3"/>
<dbReference type="OrthoDB" id="9763993at2"/>
<dbReference type="UniPathway" id="UPA00344"/>
<dbReference type="Proteomes" id="UP000001203">
    <property type="component" value="Chromosome circular"/>
</dbReference>
<dbReference type="GO" id="GO:0051539">
    <property type="term" value="F:4 iron, 4 sulfur cluster binding"/>
    <property type="evidence" value="ECO:0007669"/>
    <property type="project" value="UniProtKB-UniRule"/>
</dbReference>
<dbReference type="GO" id="GO:0061799">
    <property type="term" value="F:cyclic pyranopterin monophosphate synthase activity"/>
    <property type="evidence" value="ECO:0007669"/>
    <property type="project" value="TreeGrafter"/>
</dbReference>
<dbReference type="GO" id="GO:0061798">
    <property type="term" value="F:GTP 3',8'-cyclase activity"/>
    <property type="evidence" value="ECO:0007669"/>
    <property type="project" value="UniProtKB-UniRule"/>
</dbReference>
<dbReference type="GO" id="GO:0005525">
    <property type="term" value="F:GTP binding"/>
    <property type="evidence" value="ECO:0007669"/>
    <property type="project" value="UniProtKB-UniRule"/>
</dbReference>
<dbReference type="GO" id="GO:0046872">
    <property type="term" value="F:metal ion binding"/>
    <property type="evidence" value="ECO:0007669"/>
    <property type="project" value="UniProtKB-KW"/>
</dbReference>
<dbReference type="GO" id="GO:1904047">
    <property type="term" value="F:S-adenosyl-L-methionine binding"/>
    <property type="evidence" value="ECO:0007669"/>
    <property type="project" value="UniProtKB-UniRule"/>
</dbReference>
<dbReference type="GO" id="GO:0006777">
    <property type="term" value="P:Mo-molybdopterin cofactor biosynthetic process"/>
    <property type="evidence" value="ECO:0007669"/>
    <property type="project" value="UniProtKB-UniRule"/>
</dbReference>
<dbReference type="CDD" id="cd01335">
    <property type="entry name" value="Radical_SAM"/>
    <property type="match status" value="1"/>
</dbReference>
<dbReference type="CDD" id="cd21117">
    <property type="entry name" value="Twitch_MoaA"/>
    <property type="match status" value="1"/>
</dbReference>
<dbReference type="Gene3D" id="3.20.20.70">
    <property type="entry name" value="Aldolase class I"/>
    <property type="match status" value="1"/>
</dbReference>
<dbReference type="HAMAP" id="MF_01225_B">
    <property type="entry name" value="MoaA_B"/>
    <property type="match status" value="1"/>
</dbReference>
<dbReference type="InterPro" id="IPR013785">
    <property type="entry name" value="Aldolase_TIM"/>
</dbReference>
<dbReference type="InterPro" id="IPR006638">
    <property type="entry name" value="Elp3/MiaA/NifB-like_rSAM"/>
</dbReference>
<dbReference type="InterPro" id="IPR013483">
    <property type="entry name" value="MoaA"/>
</dbReference>
<dbReference type="InterPro" id="IPR000385">
    <property type="entry name" value="MoaA_NifB_PqqE_Fe-S-bd_CS"/>
</dbReference>
<dbReference type="InterPro" id="IPR010505">
    <property type="entry name" value="MoaA_twitch"/>
</dbReference>
<dbReference type="InterPro" id="IPR050105">
    <property type="entry name" value="MoCo_biosynth_MoaA/MoaC"/>
</dbReference>
<dbReference type="InterPro" id="IPR007197">
    <property type="entry name" value="rSAM"/>
</dbReference>
<dbReference type="NCBIfam" id="TIGR02666">
    <property type="entry name" value="moaA"/>
    <property type="match status" value="1"/>
</dbReference>
<dbReference type="PANTHER" id="PTHR22960:SF0">
    <property type="entry name" value="MOLYBDENUM COFACTOR BIOSYNTHESIS PROTEIN 1"/>
    <property type="match status" value="1"/>
</dbReference>
<dbReference type="PANTHER" id="PTHR22960">
    <property type="entry name" value="MOLYBDOPTERIN COFACTOR SYNTHESIS PROTEIN A"/>
    <property type="match status" value="1"/>
</dbReference>
<dbReference type="Pfam" id="PF13353">
    <property type="entry name" value="Fer4_12"/>
    <property type="match status" value="1"/>
</dbReference>
<dbReference type="Pfam" id="PF06463">
    <property type="entry name" value="Mob_synth_C"/>
    <property type="match status" value="1"/>
</dbReference>
<dbReference type="Pfam" id="PF04055">
    <property type="entry name" value="Radical_SAM"/>
    <property type="match status" value="1"/>
</dbReference>
<dbReference type="SFLD" id="SFLDG01383">
    <property type="entry name" value="cyclic_pyranopterin_phosphate"/>
    <property type="match status" value="1"/>
</dbReference>
<dbReference type="SFLD" id="SFLDG01067">
    <property type="entry name" value="SPASM/twitch_domain_containing"/>
    <property type="match status" value="1"/>
</dbReference>
<dbReference type="SMART" id="SM00729">
    <property type="entry name" value="Elp3"/>
    <property type="match status" value="1"/>
</dbReference>
<dbReference type="SUPFAM" id="SSF102114">
    <property type="entry name" value="Radical SAM enzymes"/>
    <property type="match status" value="1"/>
</dbReference>
<dbReference type="PROSITE" id="PS01305">
    <property type="entry name" value="MOAA_NIFB_PQQE"/>
    <property type="match status" value="1"/>
</dbReference>
<dbReference type="PROSITE" id="PS51918">
    <property type="entry name" value="RADICAL_SAM"/>
    <property type="match status" value="1"/>
</dbReference>
<keyword id="KW-0004">4Fe-4S</keyword>
<keyword id="KW-0342">GTP-binding</keyword>
<keyword id="KW-0408">Iron</keyword>
<keyword id="KW-0411">Iron-sulfur</keyword>
<keyword id="KW-0456">Lyase</keyword>
<keyword id="KW-0479">Metal-binding</keyword>
<keyword id="KW-0501">Molybdenum cofactor biosynthesis</keyword>
<keyword id="KW-0547">Nucleotide-binding</keyword>
<keyword id="KW-1185">Reference proteome</keyword>
<keyword id="KW-0949">S-adenosyl-L-methionine</keyword>
<protein>
    <recommendedName>
        <fullName evidence="1">GTP 3',8-cyclase</fullName>
        <ecNumber evidence="1">4.1.99.22</ecNumber>
    </recommendedName>
    <alternativeName>
        <fullName evidence="1">Molybdenum cofactor biosynthesis protein A</fullName>
    </alternativeName>
</protein>
<reference key="1">
    <citation type="journal article" date="2008" name="Proc. Natl. Acad. Sci. U.S.A.">
        <title>The genome of Cyanothece 51142, a unicellular diazotrophic cyanobacterium important in the marine nitrogen cycle.</title>
        <authorList>
            <person name="Welsh E.A."/>
            <person name="Liberton M."/>
            <person name="Stoeckel J."/>
            <person name="Loh T."/>
            <person name="Elvitigala T."/>
            <person name="Wang C."/>
            <person name="Wollam A."/>
            <person name="Fulton R.S."/>
            <person name="Clifton S.W."/>
            <person name="Jacobs J.M."/>
            <person name="Aurora R."/>
            <person name="Ghosh B.K."/>
            <person name="Sherman L.A."/>
            <person name="Smith R.D."/>
            <person name="Wilson R.K."/>
            <person name="Pakrasi H.B."/>
        </authorList>
    </citation>
    <scope>NUCLEOTIDE SEQUENCE [LARGE SCALE GENOMIC DNA]</scope>
    <source>
        <strain>ATCC 51142 / BH68</strain>
    </source>
</reference>
<evidence type="ECO:0000255" key="1">
    <source>
        <dbReference type="HAMAP-Rule" id="MF_01225"/>
    </source>
</evidence>
<evidence type="ECO:0000255" key="2">
    <source>
        <dbReference type="PROSITE-ProRule" id="PRU01266"/>
    </source>
</evidence>
<sequence length="337" mass="38121">MNRVDYLRISLIDRCNFRCQYCMPEGAELDYILRQELLTHEELITLLKEVFIPLGFSKFRLTGGEPLLRPGIVDLVQDIASLPATEDLSMTTNGFLLSSLAEDLYQAGLKRINISLDSLNPDTFQTIIGHKKANMWQQTWLGIQTAYEVGFDPLKLNVVVIPGVNENEIEALAELSIHKNWHIRFIEFMPIGNPELFSDLEEIRFAGRAWVASEEIREKIRQKWGLIESNIKGNGPADVFKIPGAKGTVGFISQMSECFCDRCNRMRLSADGWLRPCLLNETGQIDLKTLLRSGISATNIRDKVAHLLTIKPDINYKQRDSGNDTGIYERTMSQIGG</sequence>
<accession>B1X0G3</accession>
<comment type="function">
    <text evidence="1">Catalyzes the cyclization of GTP to (8S)-3',8-cyclo-7,8-dihydroguanosine 5'-triphosphate.</text>
</comment>
<comment type="catalytic activity">
    <reaction evidence="1">
        <text>GTP + AH2 + S-adenosyl-L-methionine = (8S)-3',8-cyclo-7,8-dihydroguanosine 5'-triphosphate + 5'-deoxyadenosine + L-methionine + A + H(+)</text>
        <dbReference type="Rhea" id="RHEA:49576"/>
        <dbReference type="ChEBI" id="CHEBI:13193"/>
        <dbReference type="ChEBI" id="CHEBI:15378"/>
        <dbReference type="ChEBI" id="CHEBI:17319"/>
        <dbReference type="ChEBI" id="CHEBI:17499"/>
        <dbReference type="ChEBI" id="CHEBI:37565"/>
        <dbReference type="ChEBI" id="CHEBI:57844"/>
        <dbReference type="ChEBI" id="CHEBI:59789"/>
        <dbReference type="ChEBI" id="CHEBI:131766"/>
        <dbReference type="EC" id="4.1.99.22"/>
    </reaction>
</comment>
<comment type="cofactor">
    <cofactor evidence="1">
        <name>[4Fe-4S] cluster</name>
        <dbReference type="ChEBI" id="CHEBI:49883"/>
    </cofactor>
    <text evidence="1">Binds 2 [4Fe-4S] clusters. Binds 1 [4Fe-4S] cluster coordinated with 3 cysteines and an exchangeable S-adenosyl-L-methionine and 1 [4Fe-4S] cluster coordinated with 3 cysteines and the GTP-derived substrate.</text>
</comment>
<comment type="pathway">
    <text evidence="1">Cofactor biosynthesis; molybdopterin biosynthesis.</text>
</comment>
<comment type="subunit">
    <text evidence="1">Monomer and homodimer.</text>
</comment>
<comment type="similarity">
    <text evidence="1">Belongs to the radical SAM superfamily. MoaA family.</text>
</comment>